<proteinExistence type="inferred from homology"/>
<sequence>MAFQVNTNINALNAHAMGLVTQRELKESLERLSSGLRINKAADDASGMTIADSLRSQAKSLGQAIANTNDGMGIIQIADKAMDEQIKILDTIKVKATQAAQDGQNTQSRKALQADIVRLIQSLDNIGNTTSYNGQTLLSGAFSNKEFQVGAYSNETIKASIGSATSDKIGQVKITTGKNITASGEVALTFKQVDGVHDVSLESVKISTSAGTGLGVLAEVINKNSNATGVRATANVITTSDSAIKSGSLSSLTVNGIEIGNILGIKKNDSDGRLVAALNAVTAQTGVEAYTDSVGRLNLRSIDGRGINIKANSTNVDGQASALTTLNGGQDITRGSTNFGRLSLVRQDARDILVVSGANVSASAGYAAIGFAKGTTANTTVNLRDVLGEFNQAVRSASGANYNKTLASENLTLGSGVTTLRGAMVVMDIAESAQKMLDKVRSDLGSVQNQMVSTVNNITITQVNVKAAESQIRDVDFAQESANFSKNNILAQSGSYAMSQANTVQQNILRLLT</sequence>
<comment type="function">
    <text>Flagellin is the subunit protein which polymerizes to form the filaments of bacterial flagella. Important for motility and virulence.</text>
</comment>
<comment type="subunit">
    <text>Heteromer of FlaA and FlaB. FlaB is located proximal to the hook while the remainder of the filament is composed of the predominant FlaA.</text>
</comment>
<comment type="subcellular location">
    <subcellularLocation>
        <location>Secreted</location>
    </subcellularLocation>
    <subcellularLocation>
        <location>Bacterial flagellum</location>
    </subcellularLocation>
</comment>
<comment type="similarity">
    <text evidence="2">Belongs to the bacterial flagellin family.</text>
</comment>
<accession>Q9XB38</accession>
<accession>E7A9B2</accession>
<protein>
    <recommendedName>
        <fullName>Flagellin A</fullName>
    </recommendedName>
</protein>
<evidence type="ECO:0000250" key="1"/>
<evidence type="ECO:0000305" key="2"/>
<name>FLAA_HELFC</name>
<reference key="1">
    <citation type="journal article" date="1999" name="Mol. Microbiol.">
        <title>Cloning and allelic exchange mutagenesis of two flagellin genes of Helicobacter felis.</title>
        <authorList>
            <person name="Josenhans C."/>
            <person name="Ferrero R.L."/>
            <person name="Labigne A."/>
            <person name="Suerbaum S."/>
        </authorList>
    </citation>
    <scope>NUCLEOTIDE SEQUENCE [GENOMIC DNA]</scope>
    <source>
        <strain>ATCC 49179 / CCUG 28539 / NCTC 12436 / CS1</strain>
    </source>
</reference>
<reference key="2">
    <citation type="submission" date="2010-12" db="EMBL/GenBank/DDBJ databases">
        <title>Comparative whole genome analysis of the carcinogenic bacterial pathogen Helicobacter felis.</title>
        <authorList>
            <person name="Arnold A."/>
            <person name="Zigova Z."/>
            <person name="Lawley T."/>
            <person name="Falkow S."/>
            <person name="Bentley S."/>
            <person name="Aslett M."/>
            <person name="Muller A."/>
        </authorList>
    </citation>
    <scope>NUCLEOTIDE SEQUENCE [LARGE SCALE GENOMIC DNA]</scope>
    <source>
        <strain>ATCC 49179 / CCUG 28539 / NCTC 12436 / CS1</strain>
    </source>
</reference>
<gene>
    <name type="primary">flaA</name>
    <name type="ordered locus">Hfelis_04060</name>
</gene>
<dbReference type="EMBL" id="Y11601">
    <property type="protein sequence ID" value="CAB46858.1"/>
    <property type="molecule type" value="Genomic_DNA"/>
</dbReference>
<dbReference type="EMBL" id="FQ670179">
    <property type="protein sequence ID" value="CBY82490.1"/>
    <property type="molecule type" value="Genomic_DNA"/>
</dbReference>
<dbReference type="RefSeq" id="WP_013468860.1">
    <property type="nucleotide sequence ID" value="NC_014810.2"/>
</dbReference>
<dbReference type="SMR" id="Q9XB38"/>
<dbReference type="STRING" id="936155.HFELIS_04060"/>
<dbReference type="GeneID" id="36134401"/>
<dbReference type="KEGG" id="hfe:HFELIS_04060"/>
<dbReference type="eggNOG" id="COG1344">
    <property type="taxonomic scope" value="Bacteria"/>
</dbReference>
<dbReference type="HOGENOM" id="CLU_011142_7_1_7"/>
<dbReference type="OrthoDB" id="9796789at2"/>
<dbReference type="Proteomes" id="UP000007934">
    <property type="component" value="Chromosome"/>
</dbReference>
<dbReference type="GO" id="GO:0009288">
    <property type="term" value="C:bacterial-type flagellum"/>
    <property type="evidence" value="ECO:0007669"/>
    <property type="project" value="UniProtKB-SubCell"/>
</dbReference>
<dbReference type="GO" id="GO:0005576">
    <property type="term" value="C:extracellular region"/>
    <property type="evidence" value="ECO:0007669"/>
    <property type="project" value="UniProtKB-SubCell"/>
</dbReference>
<dbReference type="GO" id="GO:0005198">
    <property type="term" value="F:structural molecule activity"/>
    <property type="evidence" value="ECO:0007669"/>
    <property type="project" value="InterPro"/>
</dbReference>
<dbReference type="Gene3D" id="3.30.70.2120">
    <property type="match status" value="1"/>
</dbReference>
<dbReference type="Gene3D" id="1.20.1330.10">
    <property type="entry name" value="f41 fragment of flagellin, N-terminal domain"/>
    <property type="match status" value="1"/>
</dbReference>
<dbReference type="Gene3D" id="6.10.10.10">
    <property type="entry name" value="Flagellar export chaperone, C-terminal domain"/>
    <property type="match status" value="1"/>
</dbReference>
<dbReference type="InterPro" id="IPR001492">
    <property type="entry name" value="Flagellin"/>
</dbReference>
<dbReference type="InterPro" id="IPR046358">
    <property type="entry name" value="Flagellin_C"/>
</dbReference>
<dbReference type="InterPro" id="IPR042187">
    <property type="entry name" value="Flagellin_C_sub2"/>
</dbReference>
<dbReference type="InterPro" id="IPR010810">
    <property type="entry name" value="Flagellin_hook_IN_motif"/>
</dbReference>
<dbReference type="InterPro" id="IPR001029">
    <property type="entry name" value="Flagellin_N"/>
</dbReference>
<dbReference type="NCBIfam" id="NF009234">
    <property type="entry name" value="PRK12584.1"/>
    <property type="match status" value="1"/>
</dbReference>
<dbReference type="NCBIfam" id="NF010115">
    <property type="entry name" value="PRK13588.1"/>
    <property type="match status" value="1"/>
</dbReference>
<dbReference type="PANTHER" id="PTHR42792">
    <property type="entry name" value="FLAGELLIN"/>
    <property type="match status" value="1"/>
</dbReference>
<dbReference type="PANTHER" id="PTHR42792:SF2">
    <property type="entry name" value="FLAGELLIN"/>
    <property type="match status" value="1"/>
</dbReference>
<dbReference type="Pfam" id="PF00700">
    <property type="entry name" value="Flagellin_C"/>
    <property type="match status" value="1"/>
</dbReference>
<dbReference type="Pfam" id="PF07196">
    <property type="entry name" value="Flagellin_IN"/>
    <property type="match status" value="2"/>
</dbReference>
<dbReference type="Pfam" id="PF00669">
    <property type="entry name" value="Flagellin_N"/>
    <property type="match status" value="1"/>
</dbReference>
<dbReference type="PRINTS" id="PR00207">
    <property type="entry name" value="FLAGELLIN"/>
</dbReference>
<dbReference type="SUPFAM" id="SSF64518">
    <property type="entry name" value="Phase 1 flagellin"/>
    <property type="match status" value="1"/>
</dbReference>
<keyword id="KW-0975">Bacterial flagellum</keyword>
<keyword id="KW-0964">Secreted</keyword>
<keyword id="KW-0843">Virulence</keyword>
<feature type="initiator methionine" description="Removed" evidence="1">
    <location>
        <position position="1"/>
    </location>
</feature>
<feature type="chain" id="PRO_0000182607" description="Flagellin A">
    <location>
        <begin position="2"/>
        <end position="513"/>
    </location>
</feature>
<organism>
    <name type="scientific">Helicobacter felis (strain ATCC 49179 / CCUG 28539 / NCTC 12436 / CS1)</name>
    <dbReference type="NCBI Taxonomy" id="936155"/>
    <lineage>
        <taxon>Bacteria</taxon>
        <taxon>Pseudomonadati</taxon>
        <taxon>Campylobacterota</taxon>
        <taxon>Epsilonproteobacteria</taxon>
        <taxon>Campylobacterales</taxon>
        <taxon>Helicobacteraceae</taxon>
        <taxon>Helicobacter</taxon>
    </lineage>
</organism>